<evidence type="ECO:0000255" key="1"/>
<evidence type="ECO:0000269" key="2">
    <source>
    </source>
</evidence>
<evidence type="ECO:0000269" key="3">
    <source>
    </source>
</evidence>
<evidence type="ECO:0000305" key="4"/>
<evidence type="ECO:0007829" key="5">
    <source>
        <dbReference type="PDB" id="1ERP"/>
    </source>
</evidence>
<accession>P12350</accession>
<keyword id="KW-0002">3D-structure</keyword>
<keyword id="KW-0903">Direct protein sequencing</keyword>
<keyword id="KW-1015">Disulfide bond</keyword>
<keyword id="KW-0588">Pheromone</keyword>
<keyword id="KW-0964">Secreted</keyword>
<keyword id="KW-0732">Signal</keyword>
<name>MER10_EUPRA</name>
<protein>
    <recommendedName>
        <fullName>Mating pheromone Er-10</fullName>
    </recommendedName>
    <alternativeName>
        <fullName>Euplomone R10</fullName>
    </alternativeName>
</protein>
<organism>
    <name type="scientific">Euplotes raikovi</name>
    <dbReference type="NCBI Taxonomy" id="5938"/>
    <lineage>
        <taxon>Eukaryota</taxon>
        <taxon>Sar</taxon>
        <taxon>Alveolata</taxon>
        <taxon>Ciliophora</taxon>
        <taxon>Intramacronucleata</taxon>
        <taxon>Spirotrichea</taxon>
        <taxon>Hypotrichia</taxon>
        <taxon>Euplotida</taxon>
        <taxon>Euplotidae</taxon>
        <taxon>Euplotes</taxon>
    </lineage>
</organism>
<reference key="1">
    <citation type="journal article" date="1991" name="Eur. J. Biochem.">
        <title>Structural characterization of mating pheromone precursors of the ciliate protozoan Euplotes raikovi. High conservation of pre and pro regions versus high variability of secreted regions.</title>
        <authorList>
            <person name="Miceli C."/>
            <person name="la Terza A."/>
            <person name="Bradshaw R."/>
            <person name="Luporini P."/>
        </authorList>
    </citation>
    <scope>NUCLEOTIDE SEQUENCE [GENOMIC DNA]</scope>
    <source>
        <strain>1AF(1)1N</strain>
    </source>
</reference>
<reference key="2">
    <citation type="journal article" date="1989" name="Biochemistry">
        <title>Purification, characterization, and amino acid sequence of the mating pheromone Er-10 of the ciliate Euplotes raikovi.</title>
        <authorList>
            <person name="Raffioni S."/>
            <person name="Luporini P."/>
            <person name="Bradshaw R.A."/>
        </authorList>
    </citation>
    <scope>PROTEIN SEQUENCE OF 38-75</scope>
</reference>
<reference key="3">
    <citation type="journal article" date="1993" name="J. Mol. Biol.">
        <title>Nuclear magnetic resonance solution structure of the pheromone Er-10 from the ciliated protozoan Euplotes raikovi.</title>
        <authorList>
            <person name="Brown L.R."/>
            <person name="Mronga S."/>
            <person name="Bradshaw R.A."/>
            <person name="Ortenzi C."/>
            <person name="Luporini P."/>
            <person name="Wuethrich K."/>
        </authorList>
    </citation>
    <scope>STRUCTURE BY NMR OF 38-75</scope>
    <scope>DISULFIDE BONDS</scope>
</reference>
<comment type="function">
    <text>Mating ciliate pheromones (or gamones) are diffusible extracellular communication signals that distinguish different intraspecific classes of cells commonly referred to as 'mating types'. They prepare the latter for conjugation by changing their cell surface properties.</text>
</comment>
<comment type="subunit">
    <text evidence="4">Homodimer.</text>
</comment>
<comment type="subcellular location">
    <subcellularLocation>
        <location>Secreted</location>
    </subcellularLocation>
</comment>
<sequence>MNKLAILAIIAMVLFSANAFRFQSRIRSNVEAKTETRDLCEQSALQCNEQGCHNFCSPEDKPGCLGMVWNPELCP</sequence>
<feature type="signal peptide" evidence="1">
    <location>
        <begin position="1"/>
        <end position="19"/>
    </location>
</feature>
<feature type="propeptide" id="PRO_0000008672" evidence="2">
    <location>
        <begin position="20"/>
        <end position="37"/>
    </location>
</feature>
<feature type="peptide" id="PRO_0000008673" description="Mating pheromone Er-10">
    <location>
        <begin position="38"/>
        <end position="75"/>
    </location>
</feature>
<feature type="disulfide bond" evidence="3">
    <location>
        <begin position="40"/>
        <end position="56"/>
    </location>
</feature>
<feature type="disulfide bond" evidence="3">
    <location>
        <begin position="47"/>
        <end position="74"/>
    </location>
</feature>
<feature type="disulfide bond" evidence="3">
    <location>
        <begin position="52"/>
        <end position="64"/>
    </location>
</feature>
<feature type="sequence conflict" description="In Ref. 1; CAA43481/CAA42982." evidence="4" ref="1">
    <original>C</original>
    <variation>V</variation>
    <location>
        <position position="74"/>
    </location>
</feature>
<feature type="helix" evidence="5">
    <location>
        <begin position="39"/>
        <end position="45"/>
    </location>
</feature>
<feature type="helix" evidence="5">
    <location>
        <begin position="49"/>
        <end position="54"/>
    </location>
</feature>
<feature type="helix" evidence="5">
    <location>
        <begin position="60"/>
        <end position="68"/>
    </location>
</feature>
<feature type="turn" evidence="5">
    <location>
        <begin position="71"/>
        <end position="73"/>
    </location>
</feature>
<dbReference type="EMBL" id="X61173">
    <property type="protein sequence ID" value="CAA43481.1"/>
    <property type="molecule type" value="Genomic_DNA"/>
</dbReference>
<dbReference type="EMBL" id="X60453">
    <property type="protein sequence ID" value="CAA42982.1"/>
    <property type="molecule type" value="Genomic_DNA"/>
</dbReference>
<dbReference type="PIR" id="S17341">
    <property type="entry name" value="S17341"/>
</dbReference>
<dbReference type="PIR" id="S19695">
    <property type="entry name" value="S19695"/>
</dbReference>
<dbReference type="PDB" id="1ERP">
    <property type="method" value="NMR"/>
    <property type="chains" value="A=38-75"/>
</dbReference>
<dbReference type="PDBsum" id="1ERP"/>
<dbReference type="SMR" id="P12350"/>
<dbReference type="EvolutionaryTrace" id="P12350"/>
<dbReference type="GO" id="GO:0005576">
    <property type="term" value="C:extracellular region"/>
    <property type="evidence" value="ECO:0007669"/>
    <property type="project" value="UniProtKB-SubCell"/>
</dbReference>
<dbReference type="GO" id="GO:0005186">
    <property type="term" value="F:pheromone activity"/>
    <property type="evidence" value="ECO:0007669"/>
    <property type="project" value="UniProtKB-KW"/>
</dbReference>
<dbReference type="CDD" id="cd23510">
    <property type="entry name" value="MER1_2_10"/>
    <property type="match status" value="1"/>
</dbReference>
<dbReference type="Gene3D" id="1.20.50.10">
    <property type="entry name" value="Pheromone ER-1"/>
    <property type="match status" value="1"/>
</dbReference>
<dbReference type="InterPro" id="IPR016058">
    <property type="entry name" value="Pheromone_Er1_protoz"/>
</dbReference>
<dbReference type="InterPro" id="IPR009064">
    <property type="entry name" value="Pheromone_protoz"/>
</dbReference>
<dbReference type="InterPro" id="IPR036245">
    <property type="entry name" value="Pheromone_protoz_sf"/>
</dbReference>
<dbReference type="Pfam" id="PF06360">
    <property type="entry name" value="E_raikovi_mat"/>
    <property type="match status" value="1"/>
</dbReference>
<dbReference type="SUPFAM" id="SSF47014">
    <property type="entry name" value="Protozoan pheromone proteins"/>
    <property type="match status" value="1"/>
</dbReference>
<proteinExistence type="evidence at protein level"/>
<gene>
    <name type="primary">MAT10</name>
</gene>